<proteinExistence type="evidence at protein level"/>
<reference key="1">
    <citation type="journal article" date="2001" name="Biochim. Biophys. Acta">
        <title>Characterization of ADAMTS14, a novel member of the ADAMTS metalloproteinase family.</title>
        <authorList>
            <person name="Bolz H."/>
            <person name="Ramirez A."/>
            <person name="von Brederlow B."/>
            <person name="Kubisch C."/>
        </authorList>
    </citation>
    <scope>NUCLEOTIDE SEQUENCE [MRNA] (ISOFORM A)</scope>
    <scope>TISSUE SPECIFICITY</scope>
    <scope>VARIANT PRO-590</scope>
</reference>
<reference key="2">
    <citation type="journal article" date="2002" name="Gene">
        <title>Cloning, expression analysis, and structural characterization of seven novel human ADAMTSs, a family of metalloproteinases with disintegrin and thrombospondin-1 domains.</title>
        <authorList>
            <person name="Cal S."/>
            <person name="Obaya A.J."/>
            <person name="Llamazares M."/>
            <person name="Garabaya C."/>
            <person name="Quesada V."/>
            <person name="Lopez-Otin C."/>
        </authorList>
    </citation>
    <scope>NUCLEOTIDE SEQUENCE [MRNA] (ISOFORM A)</scope>
    <scope>TISSUE SPECIFICITY</scope>
    <scope>VARIANT PRO-590</scope>
    <source>
        <tissue>Fetal lung</tissue>
    </source>
</reference>
<reference key="3">
    <citation type="journal article" date="2004" name="Nature">
        <title>The DNA sequence and comparative analysis of human chromosome 10.</title>
        <authorList>
            <person name="Deloukas P."/>
            <person name="Earthrowl M.E."/>
            <person name="Grafham D.V."/>
            <person name="Rubenfield M."/>
            <person name="French L."/>
            <person name="Steward C.A."/>
            <person name="Sims S.K."/>
            <person name="Jones M.C."/>
            <person name="Searle S."/>
            <person name="Scott C."/>
            <person name="Howe K."/>
            <person name="Hunt S.E."/>
            <person name="Andrews T.D."/>
            <person name="Gilbert J.G.R."/>
            <person name="Swarbreck D."/>
            <person name="Ashurst J.L."/>
            <person name="Taylor A."/>
            <person name="Battles J."/>
            <person name="Bird C.P."/>
            <person name="Ainscough R."/>
            <person name="Almeida J.P."/>
            <person name="Ashwell R.I.S."/>
            <person name="Ambrose K.D."/>
            <person name="Babbage A.K."/>
            <person name="Bagguley C.L."/>
            <person name="Bailey J."/>
            <person name="Banerjee R."/>
            <person name="Bates K."/>
            <person name="Beasley H."/>
            <person name="Bray-Allen S."/>
            <person name="Brown A.J."/>
            <person name="Brown J.Y."/>
            <person name="Burford D.C."/>
            <person name="Burrill W."/>
            <person name="Burton J."/>
            <person name="Cahill P."/>
            <person name="Camire D."/>
            <person name="Carter N.P."/>
            <person name="Chapman J.C."/>
            <person name="Clark S.Y."/>
            <person name="Clarke G."/>
            <person name="Clee C.M."/>
            <person name="Clegg S."/>
            <person name="Corby N."/>
            <person name="Coulson A."/>
            <person name="Dhami P."/>
            <person name="Dutta I."/>
            <person name="Dunn M."/>
            <person name="Faulkner L."/>
            <person name="Frankish A."/>
            <person name="Frankland J.A."/>
            <person name="Garner P."/>
            <person name="Garnett J."/>
            <person name="Gribble S."/>
            <person name="Griffiths C."/>
            <person name="Grocock R."/>
            <person name="Gustafson E."/>
            <person name="Hammond S."/>
            <person name="Harley J.L."/>
            <person name="Hart E."/>
            <person name="Heath P.D."/>
            <person name="Ho T.P."/>
            <person name="Hopkins B."/>
            <person name="Horne J."/>
            <person name="Howden P.J."/>
            <person name="Huckle E."/>
            <person name="Hynds C."/>
            <person name="Johnson C."/>
            <person name="Johnson D."/>
            <person name="Kana A."/>
            <person name="Kay M."/>
            <person name="Kimberley A.M."/>
            <person name="Kershaw J.K."/>
            <person name="Kokkinaki M."/>
            <person name="Laird G.K."/>
            <person name="Lawlor S."/>
            <person name="Lee H.M."/>
            <person name="Leongamornlert D.A."/>
            <person name="Laird G."/>
            <person name="Lloyd C."/>
            <person name="Lloyd D.M."/>
            <person name="Loveland J."/>
            <person name="Lovell J."/>
            <person name="McLaren S."/>
            <person name="McLay K.E."/>
            <person name="McMurray A."/>
            <person name="Mashreghi-Mohammadi M."/>
            <person name="Matthews L."/>
            <person name="Milne S."/>
            <person name="Nickerson T."/>
            <person name="Nguyen M."/>
            <person name="Overton-Larty E."/>
            <person name="Palmer S.A."/>
            <person name="Pearce A.V."/>
            <person name="Peck A.I."/>
            <person name="Pelan S."/>
            <person name="Phillimore B."/>
            <person name="Porter K."/>
            <person name="Rice C.M."/>
            <person name="Rogosin A."/>
            <person name="Ross M.T."/>
            <person name="Sarafidou T."/>
            <person name="Sehra H.K."/>
            <person name="Shownkeen R."/>
            <person name="Skuce C.D."/>
            <person name="Smith M."/>
            <person name="Standring L."/>
            <person name="Sycamore N."/>
            <person name="Tester J."/>
            <person name="Thorpe A."/>
            <person name="Torcasso W."/>
            <person name="Tracey A."/>
            <person name="Tromans A."/>
            <person name="Tsolas J."/>
            <person name="Wall M."/>
            <person name="Walsh J."/>
            <person name="Wang H."/>
            <person name="Weinstock K."/>
            <person name="West A.P."/>
            <person name="Willey D.L."/>
            <person name="Whitehead S.L."/>
            <person name="Wilming L."/>
            <person name="Wray P.W."/>
            <person name="Young L."/>
            <person name="Chen Y."/>
            <person name="Lovering R.C."/>
            <person name="Moschonas N.K."/>
            <person name="Siebert R."/>
            <person name="Fechtel K."/>
            <person name="Bentley D."/>
            <person name="Durbin R.M."/>
            <person name="Hubbard T."/>
            <person name="Doucette-Stamm L."/>
            <person name="Beck S."/>
            <person name="Smith D.R."/>
            <person name="Rogers J."/>
        </authorList>
    </citation>
    <scope>NUCLEOTIDE SEQUENCE [LARGE SCALE GENOMIC DNA]</scope>
</reference>
<reference key="4">
    <citation type="submission" date="2005-07" db="EMBL/GenBank/DDBJ databases">
        <authorList>
            <person name="Mural R.J."/>
            <person name="Istrail S."/>
            <person name="Sutton G.G."/>
            <person name="Florea L."/>
            <person name="Halpern A.L."/>
            <person name="Mobarry C.M."/>
            <person name="Lippert R."/>
            <person name="Walenz B."/>
            <person name="Shatkay H."/>
            <person name="Dew I."/>
            <person name="Miller J.R."/>
            <person name="Flanigan M.J."/>
            <person name="Edwards N.J."/>
            <person name="Bolanos R."/>
            <person name="Fasulo D."/>
            <person name="Halldorsson B.V."/>
            <person name="Hannenhalli S."/>
            <person name="Turner R."/>
            <person name="Yooseph S."/>
            <person name="Lu F."/>
            <person name="Nusskern D.R."/>
            <person name="Shue B.C."/>
            <person name="Zheng X.H."/>
            <person name="Zhong F."/>
            <person name="Delcher A.L."/>
            <person name="Huson D.H."/>
            <person name="Kravitz S.A."/>
            <person name="Mouchard L."/>
            <person name="Reinert K."/>
            <person name="Remington K.A."/>
            <person name="Clark A.G."/>
            <person name="Waterman M.S."/>
            <person name="Eichler E.E."/>
            <person name="Adams M.D."/>
            <person name="Hunkapiller M.W."/>
            <person name="Myers E.W."/>
            <person name="Venter J.C."/>
        </authorList>
    </citation>
    <scope>NUCLEOTIDE SEQUENCE [LARGE SCALE GENOMIC DNA]</scope>
</reference>
<reference key="5">
    <citation type="journal article" date="2002" name="J. Biol. Chem.">
        <title>Cloning and characterization of ADAMTS-14, a novel ADAMTS displaying high homology with ADAMTS-2 and ADAMTS-3.</title>
        <authorList>
            <person name="Colige A."/>
            <person name="Vandenberghe I."/>
            <person name="Thiry M."/>
            <person name="Lambert C.A."/>
            <person name="Van Beeumen J."/>
            <person name="Li S.-W."/>
            <person name="Prockop D.J."/>
            <person name="Lapiere C.M."/>
            <person name="Nusgens B.V."/>
        </authorList>
    </citation>
    <scope>NUCLEOTIDE SEQUENCE [MRNA] OF 29-1223 (ISOFORMS B; C AND D)</scope>
    <scope>FUNCTION</scope>
    <scope>ALTERNATIVE PROMOTER USAGE</scope>
    <scope>VARIANT PRO-590</scope>
</reference>
<reference key="6">
    <citation type="journal article" date="2019" name="J. Biol. Chem.">
        <title>Differential cleavage of lysyl oxidase by the metalloproteinases BMP1 and ADAMTS2/14 regulates collagen binding through a tyrosine sulfate domain.</title>
        <authorList>
            <person name="Rosell-Garcia T."/>
            <person name="Paradela A."/>
            <person name="Bravo G."/>
            <person name="Dupont L."/>
            <person name="Bekhouche M."/>
            <person name="Colige A."/>
            <person name="Rodriguez-Pascual F."/>
        </authorList>
    </citation>
    <scope>FUNCTION</scope>
</reference>
<protein>
    <recommendedName>
        <fullName>A disintegrin and metalloproteinase with thrombospondin motifs 14</fullName>
        <shortName>ADAM-TS 14</shortName>
        <shortName>ADAM-TS14</shortName>
        <shortName>ADAMTS-14</shortName>
        <ecNumber>3.4.24.-</ecNumber>
    </recommendedName>
</protein>
<keyword id="KW-0877">Alternative promoter usage</keyword>
<keyword id="KW-0025">Alternative splicing</keyword>
<keyword id="KW-0165">Cleavage on pair of basic residues</keyword>
<keyword id="KW-0177">Collagen degradation</keyword>
<keyword id="KW-1015">Disulfide bond</keyword>
<keyword id="KW-0272">Extracellular matrix</keyword>
<keyword id="KW-0325">Glycoprotein</keyword>
<keyword id="KW-0378">Hydrolase</keyword>
<keyword id="KW-0479">Metal-binding</keyword>
<keyword id="KW-0482">Metalloprotease</keyword>
<keyword id="KW-0645">Protease</keyword>
<keyword id="KW-1267">Proteomics identification</keyword>
<keyword id="KW-1185">Reference proteome</keyword>
<keyword id="KW-0677">Repeat</keyword>
<keyword id="KW-0964">Secreted</keyword>
<keyword id="KW-0732">Signal</keyword>
<keyword id="KW-0862">Zinc</keyword>
<keyword id="KW-0865">Zymogen</keyword>
<organism>
    <name type="scientific">Homo sapiens</name>
    <name type="common">Human</name>
    <dbReference type="NCBI Taxonomy" id="9606"/>
    <lineage>
        <taxon>Eukaryota</taxon>
        <taxon>Metazoa</taxon>
        <taxon>Chordata</taxon>
        <taxon>Craniata</taxon>
        <taxon>Vertebrata</taxon>
        <taxon>Euteleostomi</taxon>
        <taxon>Mammalia</taxon>
        <taxon>Eutheria</taxon>
        <taxon>Euarchontoglires</taxon>
        <taxon>Primates</taxon>
        <taxon>Haplorrhini</taxon>
        <taxon>Catarrhini</taxon>
        <taxon>Hominidae</taxon>
        <taxon>Homo</taxon>
    </lineage>
</organism>
<comment type="function">
    <text evidence="7 10">Has aminoprocollagen type I processing activity in the absence of ADAMTS2 (PubMed:11741898). Seems to be synthesized as a latent enzyme that requires activation to display aminoprocollagen peptidase activity (PubMed:11741898). Cleaves lysyl oxidase LOX at a site downstream of its propeptide cleavage site to produce a short LOX form (PubMed:31152061).</text>
</comment>
<comment type="subcellular location">
    <subcellularLocation>
        <location evidence="1">Secreted</location>
        <location evidence="1">Extracellular space</location>
        <location evidence="1">Extracellular matrix</location>
    </subcellularLocation>
</comment>
<comment type="alternative products">
    <event type="alternative promoter"/>
    <event type="alternative splicing"/>
    <isoform>
        <id>Q8WXS8-1</id>
        <name>A</name>
        <sequence type="displayed"/>
    </isoform>
    <isoform>
        <id>Q8WXS8-2</id>
        <name>B</name>
        <sequence type="described" ref="VSP_006958"/>
    </isoform>
    <isoform>
        <id>Q8WXS8-3</id>
        <name>C</name>
        <sequence type="described" ref="VSP_006958 VSP_005501"/>
    </isoform>
    <isoform>
        <id>Q8WXS8-4</id>
        <name>D</name>
        <sequence type="described" ref="VSP_005501"/>
    </isoform>
</comment>
<comment type="tissue specificity">
    <text evidence="8 9">Expressed in retina and at low levels in brain, lung and placenta (PubMed:11779638). High expression in fetal tissues (PubMed:11867212).</text>
</comment>
<comment type="domain">
    <text evidence="1">The spacer domain and the TSP type-1 domains are important for a tight interaction with the extracellular matrix.</text>
</comment>
<comment type="PTM">
    <text evidence="1">The precursor is cleaved by a furin endopeptidase.</text>
</comment>
<comment type="PTM">
    <text evidence="1">Glycosylated. Can be O-fucosylated by POFUT2 on a serine or a threonine residue found within the consensus sequence C1-X(2)-(S/T)-C2-G of the TSP type-1 repeat domains where C1 and C2 are the first and second cysteine residue of the repeat, respectively. Fucosylated repeats can then be further glycosylated by the addition of a beta-1,3-glucose residue by the glucosyltransferase, B3GALTL. Fucosylation mediates the efficient secretion of ADAMTS family members. Can also be C-glycosylated with one or two mannose molecules on tryptophan residues within the consensus sequence W-X-X-W of the TPRs, and N-glycosylated. These other glycosylations can also facilitate secretion (By similarity).</text>
</comment>
<comment type="miscellaneous">
    <molecule>Isoform A</molecule>
    <text>Produced by alternative promoter usage.</text>
</comment>
<comment type="miscellaneous">
    <molecule>Isoform B</molecule>
    <text evidence="12">Produced by alternative promoter usage.</text>
</comment>
<comment type="miscellaneous">
    <molecule>Isoform C</molecule>
    <text evidence="12">Produced by alternative splicing of isoform B.</text>
</comment>
<comment type="miscellaneous">
    <molecule>Isoform D</molecule>
    <text evidence="12">Produced by alternative splicing of isoform A.</text>
</comment>
<sequence>MAPLRALLSYLLPLHCALCAAAGSRTPELHLSGKLSDYGVTVPCSTDFRGRFLSHVVSGPAAASAGSMVVDTPPTLPRHSSHLRVARSPLHPGGTLWPGRVGRHSLYFNVTVFGKELHLRLRPNRRLVVPGSSVEWQEDFRELFRQPLRQECVYTGGVTGMPGAAVAISNCDGLAGLIRTDSTDFFIEPLERGQQEKEASGRTHVVYRREAVQQEWAEPDGDLHNEAFGLGDLPNLLGLVGDQLGDTERKRRHAKPGSYSIEVLLVVDDSVVRFHGKEHVQNYVLTLMNIVDEIYHDESLGVHINIALVRLIMVGYRQSLSLIERGNPSRSLEQVCRWAHSQQRQDPSHAEHHDHVVFLTRQDFGPSGYAPVTGMCHPLRSCALNHEDGFSSAFVIAHETGHVLGMEHDGQGNGCADETSLGSVMAPLVQAAFHRFHWSRCSKLELSRYLPSYDCLLDDPFDPAWPQPPELPGINYSMDEQCRFDFGSGYQTCLAFRTFEPCKQLWCSHPDNPYFCKTKKGPPLDGTECAPGKWCFKGHCIWKSPEQTYGQDGGWSSWTKFGSCSRSCGGGVRSRSRSCNNPSPAYGGRLCLGPMFEYQVCNSEECPGTYEDFRAQQCAKRNSYYVHQNAKHSWVPYEPDDDAQKCELICQSADTGDVVFMNQVVHDGTRCSYRDPYSVCARGECVPVGCDKEVGSMKADDKCGVCGGDNSHCRTVKGTLGKASKQAGALKLVQIPAGARHIQIEALEKSPHRIVVKNQVTGSFILNPKGKEATSRTFTAMGLEWEDAVEDAKESLKTSGPLPEAIAILALPPTEGGPRSSLAYKYVIHEDLLPLIGSNNVLLEEMDTYEWALKSWAPCSKACGGGIQFTKYGCRRRRDHHMVQRHLCDHKKRPKPIRRRCNQHPCSQPVWVTEEWGACSRSCGKLGVQTRGIQCLLPLSNGTHKVMPAKACAGDRPEARRPCLRVPCPAQWRLGAWSQCSATCGEGIQQRQVVCRTNANSLGHCEGDRPDTVQVCSLPACGGNHQNSTVRADVWELGTPEGQWVPQSEPLHPINKISSTEPCTGDRSVFCQMEVLDRYCSIPGYHRLCCVSCIKKASGPNPGPDPGPTSLPPFSTPGSPLPGPQDPADAAEPPGKPTGSEDHQHGRATQLPGALDTSSPGTQHPFAPETPIPGASWSISPTTPGGLPWGWTQTPTPVPEDKGQPGEDLRHPGTSLPAASPVT</sequence>
<dbReference type="EC" id="3.4.24.-"/>
<dbReference type="EMBL" id="AF358666">
    <property type="protein sequence ID" value="AAL40229.1"/>
    <property type="molecule type" value="mRNA"/>
</dbReference>
<dbReference type="EMBL" id="AJ345098">
    <property type="protein sequence ID" value="CAC87943.1"/>
    <property type="molecule type" value="mRNA"/>
</dbReference>
<dbReference type="EMBL" id="AL355344">
    <property type="status" value="NOT_ANNOTATED_CDS"/>
    <property type="molecule type" value="Genomic_DNA"/>
</dbReference>
<dbReference type="EMBL" id="AL358817">
    <property type="status" value="NOT_ANNOTATED_CDS"/>
    <property type="molecule type" value="Genomic_DNA"/>
</dbReference>
<dbReference type="EMBL" id="CH471083">
    <property type="protein sequence ID" value="EAW54409.1"/>
    <property type="molecule type" value="Genomic_DNA"/>
</dbReference>
<dbReference type="EMBL" id="CH471083">
    <property type="protein sequence ID" value="EAW54410.1"/>
    <property type="molecule type" value="Genomic_DNA"/>
</dbReference>
<dbReference type="EMBL" id="AF366351">
    <property type="protein sequence ID" value="AAL79814.1"/>
    <property type="molecule type" value="mRNA"/>
</dbReference>
<dbReference type="CCDS" id="CCDS7306.1">
    <molecule id="Q8WXS8-1"/>
</dbReference>
<dbReference type="CCDS" id="CCDS7307.1">
    <molecule id="Q8WXS8-4"/>
</dbReference>
<dbReference type="RefSeq" id="NP_542453.2">
    <molecule id="Q8WXS8-1"/>
    <property type="nucleotide sequence ID" value="NM_080722.4"/>
</dbReference>
<dbReference type="RefSeq" id="NP_631894.2">
    <molecule id="Q8WXS8-4"/>
    <property type="nucleotide sequence ID" value="NM_139155.3"/>
</dbReference>
<dbReference type="SMR" id="Q8WXS8"/>
<dbReference type="BioGRID" id="126697">
    <property type="interactions" value="9"/>
</dbReference>
<dbReference type="FunCoup" id="Q8WXS8">
    <property type="interactions" value="152"/>
</dbReference>
<dbReference type="IntAct" id="Q8WXS8">
    <property type="interactions" value="3"/>
</dbReference>
<dbReference type="STRING" id="9606.ENSP00000362304"/>
<dbReference type="MEROPS" id="M12.024"/>
<dbReference type="GlyCosmos" id="Q8WXS8">
    <property type="glycosylation" value="4 sites, No reported glycans"/>
</dbReference>
<dbReference type="GlyGen" id="Q8WXS8">
    <property type="glycosylation" value="8 sites, 1 O-linked glycan (2 sites)"/>
</dbReference>
<dbReference type="iPTMnet" id="Q8WXS8"/>
<dbReference type="PhosphoSitePlus" id="Q8WXS8"/>
<dbReference type="BioMuta" id="ADAMTS14"/>
<dbReference type="DMDM" id="317373325"/>
<dbReference type="jPOST" id="Q8WXS8"/>
<dbReference type="MassIVE" id="Q8WXS8"/>
<dbReference type="PaxDb" id="9606-ENSP00000362304"/>
<dbReference type="PeptideAtlas" id="Q8WXS8"/>
<dbReference type="ProteomicsDB" id="75096">
    <molecule id="Q8WXS8-1"/>
</dbReference>
<dbReference type="ProteomicsDB" id="75097">
    <molecule id="Q8WXS8-2"/>
</dbReference>
<dbReference type="ProteomicsDB" id="75098">
    <molecule id="Q8WXS8-3"/>
</dbReference>
<dbReference type="ProteomicsDB" id="75099">
    <molecule id="Q8WXS8-4"/>
</dbReference>
<dbReference type="Antibodypedia" id="29052">
    <property type="antibodies" value="40 antibodies from 16 providers"/>
</dbReference>
<dbReference type="DNASU" id="140766"/>
<dbReference type="Ensembl" id="ENST00000373207.2">
    <molecule id="Q8WXS8-1"/>
    <property type="protein sequence ID" value="ENSP00000362303.1"/>
    <property type="gene ID" value="ENSG00000138316.11"/>
</dbReference>
<dbReference type="Ensembl" id="ENST00000373208.5">
    <molecule id="Q8WXS8-4"/>
    <property type="protein sequence ID" value="ENSP00000362304.1"/>
    <property type="gene ID" value="ENSG00000138316.11"/>
</dbReference>
<dbReference type="GeneID" id="140766"/>
<dbReference type="KEGG" id="hsa:140766"/>
<dbReference type="MANE-Select" id="ENST00000373207.2">
    <property type="protein sequence ID" value="ENSP00000362303.1"/>
    <property type="RefSeq nucleotide sequence ID" value="NM_080722.4"/>
    <property type="RefSeq protein sequence ID" value="NP_542453.2"/>
</dbReference>
<dbReference type="UCSC" id="uc001jrg.4">
    <molecule id="Q8WXS8-1"/>
    <property type="organism name" value="human"/>
</dbReference>
<dbReference type="AGR" id="HGNC:14899"/>
<dbReference type="CTD" id="140766"/>
<dbReference type="DisGeNET" id="140766"/>
<dbReference type="GeneCards" id="ADAMTS14"/>
<dbReference type="HGNC" id="HGNC:14899">
    <property type="gene designation" value="ADAMTS14"/>
</dbReference>
<dbReference type="HPA" id="ENSG00000138316">
    <property type="expression patterns" value="Tissue enhanced (gallbladder, placenta)"/>
</dbReference>
<dbReference type="MIM" id="607506">
    <property type="type" value="gene"/>
</dbReference>
<dbReference type="neXtProt" id="NX_Q8WXS8"/>
<dbReference type="OpenTargets" id="ENSG00000138316"/>
<dbReference type="PharmGKB" id="PA24540"/>
<dbReference type="VEuPathDB" id="HostDB:ENSG00000138316"/>
<dbReference type="eggNOG" id="KOG3538">
    <property type="taxonomic scope" value="Eukaryota"/>
</dbReference>
<dbReference type="GeneTree" id="ENSGT00940000158426"/>
<dbReference type="HOGENOM" id="CLU_000660_4_1_1"/>
<dbReference type="InParanoid" id="Q8WXS8"/>
<dbReference type="OMA" id="HRFHWSH"/>
<dbReference type="OrthoDB" id="5855429at2759"/>
<dbReference type="PAN-GO" id="Q8WXS8">
    <property type="GO annotations" value="3 GO annotations based on evolutionary models"/>
</dbReference>
<dbReference type="PhylomeDB" id="Q8WXS8"/>
<dbReference type="TreeFam" id="TF313537"/>
<dbReference type="BRENDA" id="3.4.24.14">
    <property type="organism ID" value="2681"/>
</dbReference>
<dbReference type="PathwayCommons" id="Q8WXS8"/>
<dbReference type="Reactome" id="R-HSA-1650814">
    <property type="pathway name" value="Collagen biosynthesis and modifying enzymes"/>
</dbReference>
<dbReference type="Reactome" id="R-HSA-5083635">
    <property type="pathway name" value="Defective B3GALTL causes PpS"/>
</dbReference>
<dbReference type="Reactome" id="R-HSA-5173214">
    <property type="pathway name" value="O-glycosylation of TSR domain-containing proteins"/>
</dbReference>
<dbReference type="SignaLink" id="Q8WXS8"/>
<dbReference type="BioGRID-ORCS" id="140766">
    <property type="hits" value="6 hits in 1153 CRISPR screens"/>
</dbReference>
<dbReference type="ChiTaRS" id="ADAMTS14">
    <property type="organism name" value="human"/>
</dbReference>
<dbReference type="GenomeRNAi" id="140766"/>
<dbReference type="Pharos" id="Q8WXS8">
    <property type="development level" value="Tbio"/>
</dbReference>
<dbReference type="PRO" id="PR:Q8WXS8"/>
<dbReference type="Proteomes" id="UP000005640">
    <property type="component" value="Chromosome 10"/>
</dbReference>
<dbReference type="RNAct" id="Q8WXS8">
    <property type="molecule type" value="protein"/>
</dbReference>
<dbReference type="Bgee" id="ENSG00000138316">
    <property type="expression patterns" value="Expressed in gall bladder and 127 other cell types or tissues"/>
</dbReference>
<dbReference type="GO" id="GO:0031012">
    <property type="term" value="C:extracellular matrix"/>
    <property type="evidence" value="ECO:0000318"/>
    <property type="project" value="GO_Central"/>
</dbReference>
<dbReference type="GO" id="GO:0005576">
    <property type="term" value="C:extracellular region"/>
    <property type="evidence" value="ECO:0000304"/>
    <property type="project" value="Reactome"/>
</dbReference>
<dbReference type="GO" id="GO:0046872">
    <property type="term" value="F:metal ion binding"/>
    <property type="evidence" value="ECO:0007669"/>
    <property type="project" value="UniProtKB-KW"/>
</dbReference>
<dbReference type="GO" id="GO:0004222">
    <property type="term" value="F:metalloendopeptidase activity"/>
    <property type="evidence" value="ECO:0000318"/>
    <property type="project" value="GO_Central"/>
</dbReference>
<dbReference type="GO" id="GO:0030574">
    <property type="term" value="P:collagen catabolic process"/>
    <property type="evidence" value="ECO:0007669"/>
    <property type="project" value="UniProtKB-KW"/>
</dbReference>
<dbReference type="GO" id="GO:0030199">
    <property type="term" value="P:collagen fibril organization"/>
    <property type="evidence" value="ECO:0000304"/>
    <property type="project" value="Reactome"/>
</dbReference>
<dbReference type="GO" id="GO:0030198">
    <property type="term" value="P:extracellular matrix organization"/>
    <property type="evidence" value="ECO:0000318"/>
    <property type="project" value="GO_Central"/>
</dbReference>
<dbReference type="GO" id="GO:0006508">
    <property type="term" value="P:proteolysis"/>
    <property type="evidence" value="ECO:0000318"/>
    <property type="project" value="GO_Central"/>
</dbReference>
<dbReference type="CDD" id="cd04273">
    <property type="entry name" value="ZnMc_ADAMTS_like"/>
    <property type="match status" value="1"/>
</dbReference>
<dbReference type="FunFam" id="2.20.100.10:FF:000006">
    <property type="entry name" value="A disintegrin and metalloproteinase with thrombospondin motifs 1"/>
    <property type="match status" value="1"/>
</dbReference>
<dbReference type="FunFam" id="2.60.120.830:FF:000001">
    <property type="entry name" value="A disintegrin and metalloproteinase with thrombospondin motifs 1"/>
    <property type="match status" value="1"/>
</dbReference>
<dbReference type="FunFam" id="2.20.100.10:FF:000011">
    <property type="entry name" value="A disintegrin and metalloproteinase with thrombospondin motifs 3"/>
    <property type="match status" value="1"/>
</dbReference>
<dbReference type="FunFam" id="2.20.100.10:FF:000030">
    <property type="entry name" value="A disintegrin and metalloproteinase with thrombospondin motifs 3"/>
    <property type="match status" value="1"/>
</dbReference>
<dbReference type="FunFam" id="3.40.1620.60:FF:000001">
    <property type="entry name" value="A disintegrin and metalloproteinase with thrombospondin motifs 3"/>
    <property type="match status" value="1"/>
</dbReference>
<dbReference type="FunFam" id="3.40.390.10:FF:000008">
    <property type="entry name" value="A disintegrin and metalloproteinase with thrombospondin motifs 3"/>
    <property type="match status" value="1"/>
</dbReference>
<dbReference type="Gene3D" id="2.60.120.830">
    <property type="match status" value="1"/>
</dbReference>
<dbReference type="Gene3D" id="3.40.1620.60">
    <property type="match status" value="1"/>
</dbReference>
<dbReference type="Gene3D" id="3.40.390.10">
    <property type="entry name" value="Collagenase (Catalytic Domain)"/>
    <property type="match status" value="1"/>
</dbReference>
<dbReference type="Gene3D" id="2.20.100.10">
    <property type="entry name" value="Thrombospondin type-1 (TSP1) repeat"/>
    <property type="match status" value="4"/>
</dbReference>
<dbReference type="InterPro" id="IPR006586">
    <property type="entry name" value="ADAM_Cys-rich"/>
</dbReference>
<dbReference type="InterPro" id="IPR013273">
    <property type="entry name" value="ADAMTS/ADAMTS-like"/>
</dbReference>
<dbReference type="InterPro" id="IPR050439">
    <property type="entry name" value="ADAMTS_ADAMTS-like"/>
</dbReference>
<dbReference type="InterPro" id="IPR041645">
    <property type="entry name" value="ADAMTS_CR_2"/>
</dbReference>
<dbReference type="InterPro" id="IPR045371">
    <property type="entry name" value="ADAMTS_CR_3"/>
</dbReference>
<dbReference type="InterPro" id="IPR010294">
    <property type="entry name" value="ADAMTS_spacer1"/>
</dbReference>
<dbReference type="InterPro" id="IPR024079">
    <property type="entry name" value="MetalloPept_cat_dom_sf"/>
</dbReference>
<dbReference type="InterPro" id="IPR001590">
    <property type="entry name" value="Peptidase_M12B"/>
</dbReference>
<dbReference type="InterPro" id="IPR002870">
    <property type="entry name" value="Peptidase_M12B_N"/>
</dbReference>
<dbReference type="InterPro" id="IPR010909">
    <property type="entry name" value="PLAC"/>
</dbReference>
<dbReference type="InterPro" id="IPR000884">
    <property type="entry name" value="TSP1_rpt"/>
</dbReference>
<dbReference type="InterPro" id="IPR036383">
    <property type="entry name" value="TSP1_rpt_sf"/>
</dbReference>
<dbReference type="PANTHER" id="PTHR13723:SF24">
    <property type="entry name" value="A DISINTEGRIN AND METALLOPROTEINASE WITH THROMBOSPONDIN MOTIFS 14"/>
    <property type="match status" value="1"/>
</dbReference>
<dbReference type="PANTHER" id="PTHR13723">
    <property type="entry name" value="ADAMTS A DISINTEGRIN AND METALLOPROTEASE WITH THROMBOSPONDIN MOTIFS PROTEASE"/>
    <property type="match status" value="1"/>
</dbReference>
<dbReference type="Pfam" id="PF17771">
    <property type="entry name" value="ADAMTS_CR_2"/>
    <property type="match status" value="1"/>
</dbReference>
<dbReference type="Pfam" id="PF19236">
    <property type="entry name" value="ADAMTS_CR_3"/>
    <property type="match status" value="1"/>
</dbReference>
<dbReference type="Pfam" id="PF05986">
    <property type="entry name" value="ADAMTS_spacer1"/>
    <property type="match status" value="1"/>
</dbReference>
<dbReference type="Pfam" id="PF01562">
    <property type="entry name" value="Pep_M12B_propep"/>
    <property type="match status" value="1"/>
</dbReference>
<dbReference type="Pfam" id="PF01421">
    <property type="entry name" value="Reprolysin"/>
    <property type="match status" value="1"/>
</dbReference>
<dbReference type="Pfam" id="PF19030">
    <property type="entry name" value="TSP1_ADAMTS"/>
    <property type="match status" value="3"/>
</dbReference>
<dbReference type="Pfam" id="PF00090">
    <property type="entry name" value="TSP_1"/>
    <property type="match status" value="1"/>
</dbReference>
<dbReference type="PRINTS" id="PR01857">
    <property type="entry name" value="ADAMTSFAMILY"/>
</dbReference>
<dbReference type="SMART" id="SM00608">
    <property type="entry name" value="ACR"/>
    <property type="match status" value="1"/>
</dbReference>
<dbReference type="SMART" id="SM00209">
    <property type="entry name" value="TSP1"/>
    <property type="match status" value="4"/>
</dbReference>
<dbReference type="SUPFAM" id="SSF55486">
    <property type="entry name" value="Metalloproteases ('zincins'), catalytic domain"/>
    <property type="match status" value="1"/>
</dbReference>
<dbReference type="SUPFAM" id="SSF82895">
    <property type="entry name" value="TSP-1 type 1 repeat"/>
    <property type="match status" value="4"/>
</dbReference>
<dbReference type="PROSITE" id="PS50215">
    <property type="entry name" value="ADAM_MEPRO"/>
    <property type="match status" value="1"/>
</dbReference>
<dbReference type="PROSITE" id="PS50900">
    <property type="entry name" value="PLAC"/>
    <property type="match status" value="1"/>
</dbReference>
<dbReference type="PROSITE" id="PS50092">
    <property type="entry name" value="TSP1"/>
    <property type="match status" value="4"/>
</dbReference>
<gene>
    <name type="primary">ADAMTS14</name>
</gene>
<feature type="signal peptide" evidence="2">
    <location>
        <begin position="1"/>
        <end position="22"/>
    </location>
</feature>
<feature type="propeptide" id="PRO_0000029190" evidence="1">
    <location>
        <begin position="23"/>
        <end position="252"/>
    </location>
</feature>
<feature type="chain" id="PRO_0000029191" description="A disintegrin and metalloproteinase with thrombospondin motifs 14">
    <location>
        <begin position="253"/>
        <end position="1223"/>
    </location>
</feature>
<feature type="domain" description="Peptidase M12B" evidence="5">
    <location>
        <begin position="259"/>
        <end position="460"/>
    </location>
</feature>
<feature type="domain" description="Disintegrin">
    <location>
        <begin position="461"/>
        <end position="551"/>
    </location>
</feature>
<feature type="domain" description="TSP type-1 1" evidence="3">
    <location>
        <begin position="552"/>
        <end position="607"/>
    </location>
</feature>
<feature type="domain" description="TSP type-1 2" evidence="3">
    <location>
        <begin position="847"/>
        <end position="907"/>
    </location>
</feature>
<feature type="domain" description="TSP type-1 3" evidence="3">
    <location>
        <begin position="908"/>
        <end position="967"/>
    </location>
</feature>
<feature type="domain" description="TSP type-1 4" evidence="3">
    <location>
        <begin position="968"/>
        <end position="1022"/>
    </location>
</feature>
<feature type="domain" description="PLAC" evidence="4">
    <location>
        <begin position="1059"/>
        <end position="1097"/>
    </location>
</feature>
<feature type="region of interest" description="Spacer">
    <location>
        <begin position="730"/>
        <end position="846"/>
    </location>
</feature>
<feature type="region of interest" description="Disordered" evidence="6">
    <location>
        <begin position="1100"/>
        <end position="1223"/>
    </location>
</feature>
<feature type="compositionally biased region" description="Pro residues" evidence="6">
    <location>
        <begin position="1101"/>
        <end position="1125"/>
    </location>
</feature>
<feature type="compositionally biased region" description="Basic and acidic residues" evidence="6">
    <location>
        <begin position="1199"/>
        <end position="1211"/>
    </location>
</feature>
<feature type="active site" evidence="5">
    <location>
        <position position="399"/>
    </location>
</feature>
<feature type="binding site" evidence="5">
    <location>
        <position position="398"/>
    </location>
    <ligand>
        <name>Zn(2+)</name>
        <dbReference type="ChEBI" id="CHEBI:29105"/>
        <note>catalytic</note>
    </ligand>
</feature>
<feature type="binding site" evidence="5">
    <location>
        <position position="402"/>
    </location>
    <ligand>
        <name>Zn(2+)</name>
        <dbReference type="ChEBI" id="CHEBI:29105"/>
        <note>catalytic</note>
    </ligand>
</feature>
<feature type="binding site" evidence="5">
    <location>
        <position position="408"/>
    </location>
    <ligand>
        <name>Zn(2+)</name>
        <dbReference type="ChEBI" id="CHEBI:29105"/>
        <note>catalytic</note>
    </ligand>
</feature>
<feature type="glycosylation site" description="N-linked (GlcNAc...) asparagine" evidence="2">
    <location>
        <position position="109"/>
    </location>
</feature>
<feature type="glycosylation site" description="N-linked (GlcNAc...) asparagine" evidence="2">
    <location>
        <position position="475"/>
    </location>
</feature>
<feature type="glycosylation site" description="N-linked (GlcNAc...) asparagine" evidence="2">
    <location>
        <position position="941"/>
    </location>
</feature>
<feature type="glycosylation site" description="N-linked (GlcNAc...) asparagine" evidence="2">
    <location>
        <position position="1027"/>
    </location>
</feature>
<feature type="disulfide bond" evidence="1">
    <location>
        <begin position="336"/>
        <end position="382"/>
    </location>
</feature>
<feature type="disulfide bond" evidence="1">
    <location>
        <begin position="376"/>
        <end position="455"/>
    </location>
</feature>
<feature type="disulfide bond" evidence="1">
    <location>
        <begin position="415"/>
        <end position="441"/>
    </location>
</feature>
<feature type="disulfide bond" evidence="1">
    <location>
        <begin position="482"/>
        <end position="507"/>
    </location>
</feature>
<feature type="disulfide bond" evidence="1">
    <location>
        <begin position="493"/>
        <end position="516"/>
    </location>
</feature>
<feature type="disulfide bond" evidence="1">
    <location>
        <begin position="502"/>
        <end position="535"/>
    </location>
</feature>
<feature type="disulfide bond" evidence="1">
    <location>
        <begin position="529"/>
        <end position="540"/>
    </location>
</feature>
<feature type="disulfide bond" evidence="1">
    <location>
        <begin position="564"/>
        <end position="601"/>
    </location>
</feature>
<feature type="disulfide bond" evidence="1">
    <location>
        <begin position="568"/>
        <end position="606"/>
    </location>
</feature>
<feature type="disulfide bond" evidence="1">
    <location>
        <begin position="579"/>
        <end position="591"/>
    </location>
</feature>
<feature type="disulfide bond" evidence="1">
    <location>
        <begin position="980"/>
        <end position="1016"/>
    </location>
</feature>
<feature type="disulfide bond" evidence="1">
    <location>
        <begin position="984"/>
        <end position="1021"/>
    </location>
</feature>
<feature type="disulfide bond" evidence="1">
    <location>
        <begin position="995"/>
        <end position="1005"/>
    </location>
</feature>
<feature type="splice variant" id="VSP_006958" description="In isoform B and isoform C." evidence="11">
    <location>
        <begin position="1"/>
        <end position="67"/>
    </location>
</feature>
<feature type="splice variant" id="VSP_005501" description="In isoform C and isoform D." evidence="11">
    <original>G</original>
    <variation>GMQG</variation>
    <location>
        <position position="368"/>
    </location>
</feature>
<feature type="sequence variant" id="VAR_047837" description="In dbSNP:rs34022601.">
    <original>R</original>
    <variation>C</variation>
    <location>
        <position position="179"/>
    </location>
</feature>
<feature type="sequence variant" id="VAR_047838" description="In dbSNP:rs10823607." evidence="7 8 9">
    <original>L</original>
    <variation>P</variation>
    <location>
        <position position="590"/>
    </location>
</feature>
<feature type="sequence variant" id="VAR_047839" description="In dbSNP:rs12774070.">
    <original>L</original>
    <variation>M</variation>
    <location>
        <position position="937"/>
    </location>
</feature>
<feature type="sequence variant" id="VAR_047840" description="In dbSNP:rs10999516.">
    <original>S</original>
    <variation>N</variation>
    <location>
        <position position="1017"/>
    </location>
</feature>
<feature type="sequence variant" id="VAR_047841" description="In dbSNP:rs4747096.">
    <original>E</original>
    <variation>G</variation>
    <location>
        <position position="1049"/>
    </location>
</feature>
<feature type="sequence conflict" description="In Ref. 2; CAC87943." evidence="12" ref="2">
    <original>Q</original>
    <variation>R</variation>
    <location>
        <position position="868"/>
    </location>
</feature>
<feature type="sequence conflict" description="In Ref. 2; CAC87943." evidence="12" ref="2">
    <original>Q</original>
    <variation>H</variation>
    <location>
        <position position="884"/>
    </location>
</feature>
<feature type="sequence conflict" description="In Ref. 2; CAC87943." evidence="12" ref="2">
    <original>C</original>
    <variation>S</variation>
    <location>
        <position position="901"/>
    </location>
</feature>
<feature type="sequence conflict" description="In Ref. 2; CAC87943." evidence="12" ref="2">
    <original>C</original>
    <variation>Y</variation>
    <location>
        <position position="923"/>
    </location>
</feature>
<feature type="sequence conflict" description="In Ref. 2; CAC87943." evidence="12" ref="2">
    <original>N</original>
    <variation>S</variation>
    <location>
        <position position="1024"/>
    </location>
</feature>
<accession>Q8WXS8</accession>
<accession>Q5T4G0</accession>
<accession>Q5T4G1</accession>
<accession>Q8TE55</accession>
<accession>Q8TEY8</accession>
<name>ATS14_HUMAN</name>
<evidence type="ECO:0000250" key="1"/>
<evidence type="ECO:0000255" key="2"/>
<evidence type="ECO:0000255" key="3">
    <source>
        <dbReference type="PROSITE-ProRule" id="PRU00210"/>
    </source>
</evidence>
<evidence type="ECO:0000255" key="4">
    <source>
        <dbReference type="PROSITE-ProRule" id="PRU00233"/>
    </source>
</evidence>
<evidence type="ECO:0000255" key="5">
    <source>
        <dbReference type="PROSITE-ProRule" id="PRU00276"/>
    </source>
</evidence>
<evidence type="ECO:0000256" key="6">
    <source>
        <dbReference type="SAM" id="MobiDB-lite"/>
    </source>
</evidence>
<evidence type="ECO:0000269" key="7">
    <source>
    </source>
</evidence>
<evidence type="ECO:0000269" key="8">
    <source>
    </source>
</evidence>
<evidence type="ECO:0000269" key="9">
    <source>
    </source>
</evidence>
<evidence type="ECO:0000269" key="10">
    <source>
    </source>
</evidence>
<evidence type="ECO:0000303" key="11">
    <source>
    </source>
</evidence>
<evidence type="ECO:0000305" key="12"/>